<dbReference type="EMBL" id="U16736">
    <property type="protein sequence ID" value="AAA68023.1"/>
    <property type="molecule type" value="Genomic_DNA"/>
</dbReference>
<dbReference type="Proteomes" id="UP001515400">
    <property type="component" value="Genome"/>
</dbReference>
<accession>Q87014</accession>
<keyword id="KW-1185">Reference proteome</keyword>
<reference key="1">
    <citation type="journal article" date="1995" name="Virology">
        <title>Sequence of subterranean clover stunt virus DNA: affinities with the geminiviruses.</title>
        <authorList>
            <person name="Boevink P.C."/>
            <person name="Chu P.W.G."/>
            <person name="Keese P.K."/>
        </authorList>
    </citation>
    <scope>NUCLEOTIDE SEQUENCE [GENOMIC DNA]</scope>
</reference>
<feature type="chain" id="PRO_0000378536" description="Protein U1">
    <location>
        <begin position="1"/>
        <end position="146"/>
    </location>
</feature>
<protein>
    <recommendedName>
        <fullName>Protein U1</fullName>
    </recommendedName>
</protein>
<gene>
    <name type="primary">DNA-U1</name>
    <name type="synonym">C7</name>
</gene>
<organism>
    <name type="scientific">Subterranean clover stunt virus (strain F)</name>
    <name type="common">SCSV</name>
    <dbReference type="NCBI Taxonomy" id="291607"/>
    <lineage>
        <taxon>Viruses</taxon>
        <taxon>Monodnaviria</taxon>
        <taxon>Shotokuvirae</taxon>
        <taxon>Cressdnaviricota</taxon>
        <taxon>Arfiviricetes</taxon>
        <taxon>Mulpavirales</taxon>
        <taxon>Nanoviridae</taxon>
        <taxon>Nanovirus</taxon>
        <taxon>Subterranean clover stunt virus</taxon>
    </lineage>
</organism>
<sequence>MVSFSFPEIYDVSDDVLVSDSRRSVAVEVEEKVQVINVKVLRLIEAVDEDRVGVKVMFRLCYRYRRELKITLLGCKMELWTSLKSSGKYSVQSLLQRKLNGICVSNYCIGIDMFVSNVKELINRCKWITSVQGVNPICCLYHMDEE</sequence>
<name>U1_SCSVF</name>
<proteinExistence type="inferred from homology"/>
<evidence type="ECO:0000305" key="1"/>
<comment type="similarity">
    <text evidence="1">Belongs to the nanovirus U1 protein family.</text>
</comment>
<organismHost>
    <name type="scientific">Trifolium subterraneum</name>
    <name type="common">Subterranean clover</name>
    <dbReference type="NCBI Taxonomy" id="3900"/>
</organismHost>